<reference key="1">
    <citation type="journal article" date="2004" name="J. Mol. Microbiol. Biotechnol.">
        <title>The complete genome sequence of Bacillus licheniformis DSM13, an organism with great industrial potential.</title>
        <authorList>
            <person name="Veith B."/>
            <person name="Herzberg C."/>
            <person name="Steckel S."/>
            <person name="Feesche J."/>
            <person name="Maurer K.H."/>
            <person name="Ehrenreich P."/>
            <person name="Baeumer S."/>
            <person name="Henne A."/>
            <person name="Liesegang H."/>
            <person name="Merkl R."/>
            <person name="Ehrenreich A."/>
            <person name="Gottschalk G."/>
        </authorList>
    </citation>
    <scope>NUCLEOTIDE SEQUENCE [LARGE SCALE GENOMIC DNA]</scope>
    <source>
        <strain>ATCC 14580 / DSM 13 / JCM 2505 / CCUG 7422 / NBRC 12200 / NCIMB 9375 / NCTC 10341 / NRRL NRS-1264 / Gibson 46</strain>
    </source>
</reference>
<reference key="2">
    <citation type="journal article" date="2004" name="Genome Biol.">
        <title>Complete genome sequence of the industrial bacterium Bacillus licheniformis and comparisons with closely related Bacillus species.</title>
        <authorList>
            <person name="Rey M.W."/>
            <person name="Ramaiya P."/>
            <person name="Nelson B.A."/>
            <person name="Brody-Karpin S.D."/>
            <person name="Zaretsky E.J."/>
            <person name="Tang M."/>
            <person name="Lopez de Leon A."/>
            <person name="Xiang H."/>
            <person name="Gusti V."/>
            <person name="Clausen I.G."/>
            <person name="Olsen P.B."/>
            <person name="Rasmussen M.D."/>
            <person name="Andersen J.T."/>
            <person name="Joergensen P.L."/>
            <person name="Larsen T.S."/>
            <person name="Sorokin A."/>
            <person name="Bolotin A."/>
            <person name="Lapidus A."/>
            <person name="Galleron N."/>
            <person name="Ehrlich S.D."/>
            <person name="Berka R.M."/>
        </authorList>
    </citation>
    <scope>NUCLEOTIDE SEQUENCE [LARGE SCALE GENOMIC DNA]</scope>
    <source>
        <strain>ATCC 14580 / DSM 13 / JCM 2505 / CCUG 7422 / NBRC 12200 / NCIMB 9375 / NCTC 10341 / NRRL NRS-1264 / Gibson 46</strain>
    </source>
</reference>
<name>RSIW_BACLD</name>
<gene>
    <name type="primary">rsiW</name>
    <name type="ordered locus">BLi00200</name>
    <name type="ordered locus">BL02700</name>
</gene>
<dbReference type="EMBL" id="AE017333">
    <property type="protein sequence ID" value="AAU39164.1"/>
    <property type="molecule type" value="Genomic_DNA"/>
</dbReference>
<dbReference type="EMBL" id="CP000002">
    <property type="protein sequence ID" value="AAU21819.1"/>
    <property type="molecule type" value="Genomic_DNA"/>
</dbReference>
<dbReference type="RefSeq" id="WP_003178441.1">
    <property type="nucleotide sequence ID" value="NC_006322.1"/>
</dbReference>
<dbReference type="SMR" id="Q65P50"/>
<dbReference type="STRING" id="279010.BL02700"/>
<dbReference type="GeneID" id="92858836"/>
<dbReference type="KEGG" id="bld:BLi00200"/>
<dbReference type="KEGG" id="bli:BL02700"/>
<dbReference type="eggNOG" id="COG5662">
    <property type="taxonomic scope" value="Bacteria"/>
</dbReference>
<dbReference type="HOGENOM" id="CLU_1347302_0_0_9"/>
<dbReference type="Proteomes" id="UP000000606">
    <property type="component" value="Chromosome"/>
</dbReference>
<dbReference type="Bgee" id="BL02700">
    <property type="expression patterns" value="Expressed in testis"/>
</dbReference>
<dbReference type="GO" id="GO:0016020">
    <property type="term" value="C:membrane"/>
    <property type="evidence" value="ECO:0007669"/>
    <property type="project" value="UniProtKB-SubCell"/>
</dbReference>
<dbReference type="GO" id="GO:0046872">
    <property type="term" value="F:metal ion binding"/>
    <property type="evidence" value="ECO:0007669"/>
    <property type="project" value="UniProtKB-KW"/>
</dbReference>
<dbReference type="Gene3D" id="1.10.10.1320">
    <property type="entry name" value="Anti-sigma factor, zinc-finger domain"/>
    <property type="match status" value="1"/>
</dbReference>
<dbReference type="InterPro" id="IPR041916">
    <property type="entry name" value="Anti_sigma_zinc_sf"/>
</dbReference>
<dbReference type="InterPro" id="IPR027383">
    <property type="entry name" value="Znf_put"/>
</dbReference>
<dbReference type="Pfam" id="PF13490">
    <property type="entry name" value="zf-HC2"/>
    <property type="match status" value="1"/>
</dbReference>
<evidence type="ECO:0000250" key="1"/>
<evidence type="ECO:0000255" key="2"/>
<evidence type="ECO:0000305" key="3"/>
<proteinExistence type="inferred from homology"/>
<keyword id="KW-0472">Membrane</keyword>
<keyword id="KW-0479">Metal-binding</keyword>
<keyword id="KW-1185">Reference proteome</keyword>
<keyword id="KW-0812">Transmembrane</keyword>
<keyword id="KW-1133">Transmembrane helix</keyword>
<keyword id="KW-0862">Zinc</keyword>
<sequence length="206" mass="22828">MSCPEHIVQLMHKYLDGDILPEDETRLKEHLQSCEGCKKHLHEMEKSIALVQSTSHLTAPANFTANVLANLPKEKRTASINRWLKAHPFLVAAALFAILMGGSFFSSWKNDHDFSVSSQPNLVVKNNTVIVPEGEVVKGDVTVKNGKLIIEGKVDGDVTIVNGEKYTASAGQVTGQIHEINEVFDWIWYKIKSTGKSVFGVKESKE</sequence>
<organism>
    <name type="scientific">Bacillus licheniformis (strain ATCC 14580 / DSM 13 / JCM 2505 / CCUG 7422 / NBRC 12200 / NCIMB 9375 / NCTC 10341 / NRRL NRS-1264 / Gibson 46)</name>
    <dbReference type="NCBI Taxonomy" id="279010"/>
    <lineage>
        <taxon>Bacteria</taxon>
        <taxon>Bacillati</taxon>
        <taxon>Bacillota</taxon>
        <taxon>Bacilli</taxon>
        <taxon>Bacillales</taxon>
        <taxon>Bacillaceae</taxon>
        <taxon>Bacillus</taxon>
    </lineage>
</organism>
<protein>
    <recommendedName>
        <fullName>Anti-sigma-W factor RsiW</fullName>
    </recommendedName>
</protein>
<accession>Q65P50</accession>
<accession>Q62ZI9</accession>
<feature type="chain" id="PRO_0000248141" description="Anti-sigma-W factor RsiW">
    <location>
        <begin position="1"/>
        <end position="206"/>
    </location>
</feature>
<feature type="topological domain" description="Cytoplasmic" evidence="2">
    <location>
        <begin position="1"/>
        <end position="87"/>
    </location>
</feature>
<feature type="transmembrane region" description="Helical" evidence="2">
    <location>
        <begin position="88"/>
        <end position="108"/>
    </location>
</feature>
<feature type="topological domain" description="Extracellular" evidence="2">
    <location>
        <begin position="109"/>
        <end position="206"/>
    </location>
</feature>
<feature type="binding site" evidence="1">
    <location>
        <position position="30"/>
    </location>
    <ligand>
        <name>Zn(2+)</name>
        <dbReference type="ChEBI" id="CHEBI:29105"/>
    </ligand>
</feature>
<feature type="binding site" evidence="1">
    <location>
        <position position="34"/>
    </location>
    <ligand>
        <name>Zn(2+)</name>
        <dbReference type="ChEBI" id="CHEBI:29105"/>
    </ligand>
</feature>
<feature type="binding site" evidence="1">
    <location>
        <position position="37"/>
    </location>
    <ligand>
        <name>Zn(2+)</name>
        <dbReference type="ChEBI" id="CHEBI:29105"/>
    </ligand>
</feature>
<comment type="function">
    <text evidence="1">Is the anti-sigma factor for SigW. The presence of RsiW leads to the inactivation of SigW, and its proteolytic destruction to sigma-W activation (By similarity).</text>
</comment>
<comment type="cofactor">
    <cofactor evidence="1">
        <name>Zn(2+)</name>
        <dbReference type="ChEBI" id="CHEBI:29105"/>
    </cofactor>
    <text evidence="1">Binds 1 Zn(2+) ion per subunit.</text>
</comment>
<comment type="subcellular location">
    <subcellularLocation>
        <location>Membrane</location>
        <topology>Single-pass membrane protein</topology>
    </subcellularLocation>
    <text evidence="1">Site-2 clipped RsiW is released from the membrane to the cytoplasm.</text>
</comment>
<comment type="PTM">
    <text evidence="1">Is processed by three successive proteolytic events. First, the extracellular region of RsiW is cleaved by PrsW (Site-1 cleavage) in response to cell envelope stresses. Next, it undergoes cleavage at an intramembrane site (Site-2 cleavage) mediated by RasP. This cleavage uncovers a cryptic proteolytic tag with conserved alanine residues in the transmembrane segment, that is recognized mainly by the ClpXP protease, which completely degrades the protein in the cytoplasm and leads to the induction of the sigma-W-controlled genes (By similarity).</text>
</comment>
<comment type="similarity">
    <text evidence="3">Belongs to the zinc-associated anti-sigma factor (ZAS) superfamily. Anti-sigma-W factor family.</text>
</comment>